<reference key="1">
    <citation type="journal article" date="2001" name="Nature">
        <title>Complete genome sequence of a multiple drug resistant Salmonella enterica serovar Typhi CT18.</title>
        <authorList>
            <person name="Parkhill J."/>
            <person name="Dougan G."/>
            <person name="James K.D."/>
            <person name="Thomson N.R."/>
            <person name="Pickard D."/>
            <person name="Wain J."/>
            <person name="Churcher C.M."/>
            <person name="Mungall K.L."/>
            <person name="Bentley S.D."/>
            <person name="Holden M.T.G."/>
            <person name="Sebaihia M."/>
            <person name="Baker S."/>
            <person name="Basham D."/>
            <person name="Brooks K."/>
            <person name="Chillingworth T."/>
            <person name="Connerton P."/>
            <person name="Cronin A."/>
            <person name="Davis P."/>
            <person name="Davies R.M."/>
            <person name="Dowd L."/>
            <person name="White N."/>
            <person name="Farrar J."/>
            <person name="Feltwell T."/>
            <person name="Hamlin N."/>
            <person name="Haque A."/>
            <person name="Hien T.T."/>
            <person name="Holroyd S."/>
            <person name="Jagels K."/>
            <person name="Krogh A."/>
            <person name="Larsen T.S."/>
            <person name="Leather S."/>
            <person name="Moule S."/>
            <person name="O'Gaora P."/>
            <person name="Parry C."/>
            <person name="Quail M.A."/>
            <person name="Rutherford K.M."/>
            <person name="Simmonds M."/>
            <person name="Skelton J."/>
            <person name="Stevens K."/>
            <person name="Whitehead S."/>
            <person name="Barrell B.G."/>
        </authorList>
    </citation>
    <scope>NUCLEOTIDE SEQUENCE [LARGE SCALE GENOMIC DNA]</scope>
    <source>
        <strain>CT18</strain>
    </source>
</reference>
<reference key="2">
    <citation type="journal article" date="2003" name="J. Bacteriol.">
        <title>Comparative genomics of Salmonella enterica serovar Typhi strains Ty2 and CT18.</title>
        <authorList>
            <person name="Deng W."/>
            <person name="Liou S.-R."/>
            <person name="Plunkett G. III"/>
            <person name="Mayhew G.F."/>
            <person name="Rose D.J."/>
            <person name="Burland V."/>
            <person name="Kodoyianni V."/>
            <person name="Schwartz D.C."/>
            <person name="Blattner F.R."/>
        </authorList>
    </citation>
    <scope>NUCLEOTIDE SEQUENCE [LARGE SCALE GENOMIC DNA]</scope>
    <source>
        <strain>ATCC 700931 / Ty2</strain>
    </source>
</reference>
<organism>
    <name type="scientific">Salmonella typhi</name>
    <dbReference type="NCBI Taxonomy" id="90370"/>
    <lineage>
        <taxon>Bacteria</taxon>
        <taxon>Pseudomonadati</taxon>
        <taxon>Pseudomonadota</taxon>
        <taxon>Gammaproteobacteria</taxon>
        <taxon>Enterobacterales</taxon>
        <taxon>Enterobacteriaceae</taxon>
        <taxon>Salmonella</taxon>
    </lineage>
</organism>
<protein>
    <recommendedName>
        <fullName>Succinate dehydrogenase cytochrome b556 subunit</fullName>
        <shortName>Cytochrome b-556</shortName>
    </recommendedName>
</protein>
<sequence>MIRNVKKQRPVNLDLQTIRFPITAIASILHRVSGVITFIAVGILLWLLGTSLSSPEGFQQAADIMDGFIVKFIMWGILTALAYHVIVGIRHMLMDFGYLEETFEAGQRSAKISFVITVVLSLLAGVLVW</sequence>
<feature type="chain" id="PRO_0000203515" description="Succinate dehydrogenase cytochrome b556 subunit">
    <location>
        <begin position="1"/>
        <end position="129"/>
    </location>
</feature>
<feature type="topological domain" description="Cytoplasmic" evidence="1">
    <location>
        <begin position="1"/>
        <end position="26"/>
    </location>
</feature>
<feature type="transmembrane region" description="Helical" evidence="1">
    <location>
        <begin position="27"/>
        <end position="52"/>
    </location>
</feature>
<feature type="topological domain" description="Periplasmic" evidence="1">
    <location>
        <begin position="53"/>
        <end position="68"/>
    </location>
</feature>
<feature type="transmembrane region" description="Helical" evidence="1">
    <location>
        <begin position="69"/>
        <end position="89"/>
    </location>
</feature>
<feature type="topological domain" description="Cytoplasmic" evidence="1">
    <location>
        <begin position="90"/>
        <end position="108"/>
    </location>
</feature>
<feature type="transmembrane region" description="Helical" evidence="1">
    <location>
        <begin position="109"/>
        <end position="129"/>
    </location>
</feature>
<feature type="binding site" description="axial binding residue" evidence="1">
    <location>
        <position position="84"/>
    </location>
    <ligand>
        <name>heme</name>
        <dbReference type="ChEBI" id="CHEBI:30413"/>
        <note>ligand shared with second transmembrane subunit</note>
    </ligand>
    <ligandPart>
        <name>Fe</name>
        <dbReference type="ChEBI" id="CHEBI:18248"/>
    </ligandPart>
</feature>
<keyword id="KW-0997">Cell inner membrane</keyword>
<keyword id="KW-1003">Cell membrane</keyword>
<keyword id="KW-0249">Electron transport</keyword>
<keyword id="KW-0349">Heme</keyword>
<keyword id="KW-0408">Iron</keyword>
<keyword id="KW-0472">Membrane</keyword>
<keyword id="KW-0479">Metal-binding</keyword>
<keyword id="KW-0812">Transmembrane</keyword>
<keyword id="KW-1133">Transmembrane helix</keyword>
<keyword id="KW-0813">Transport</keyword>
<keyword id="KW-0816">Tricarboxylic acid cycle</keyword>
<dbReference type="EMBL" id="AL513382">
    <property type="protein sequence ID" value="CAD05194.1"/>
    <property type="molecule type" value="Genomic_DNA"/>
</dbReference>
<dbReference type="EMBL" id="AE014613">
    <property type="protein sequence ID" value="AAO69758.1"/>
    <property type="molecule type" value="Genomic_DNA"/>
</dbReference>
<dbReference type="RefSeq" id="NP_455288.1">
    <property type="nucleotide sequence ID" value="NC_003198.1"/>
</dbReference>
<dbReference type="SMR" id="P63726"/>
<dbReference type="STRING" id="220341.gene:17584781"/>
<dbReference type="KEGG" id="stt:t2144"/>
<dbReference type="KEGG" id="sty:STY0775"/>
<dbReference type="PATRIC" id="fig|220341.7.peg.780"/>
<dbReference type="eggNOG" id="COG2009">
    <property type="taxonomic scope" value="Bacteria"/>
</dbReference>
<dbReference type="HOGENOM" id="CLU_094691_2_1_6"/>
<dbReference type="OMA" id="YHLVAGI"/>
<dbReference type="OrthoDB" id="9799441at2"/>
<dbReference type="UniPathway" id="UPA00223"/>
<dbReference type="Proteomes" id="UP000000541">
    <property type="component" value="Chromosome"/>
</dbReference>
<dbReference type="Proteomes" id="UP000002670">
    <property type="component" value="Chromosome"/>
</dbReference>
<dbReference type="GO" id="GO:0005886">
    <property type="term" value="C:plasma membrane"/>
    <property type="evidence" value="ECO:0007669"/>
    <property type="project" value="UniProtKB-SubCell"/>
</dbReference>
<dbReference type="GO" id="GO:0009055">
    <property type="term" value="F:electron transfer activity"/>
    <property type="evidence" value="ECO:0007669"/>
    <property type="project" value="InterPro"/>
</dbReference>
<dbReference type="GO" id="GO:0046872">
    <property type="term" value="F:metal ion binding"/>
    <property type="evidence" value="ECO:0007669"/>
    <property type="project" value="UniProtKB-KW"/>
</dbReference>
<dbReference type="GO" id="GO:0006099">
    <property type="term" value="P:tricarboxylic acid cycle"/>
    <property type="evidence" value="ECO:0007669"/>
    <property type="project" value="UniProtKB-UniPathway"/>
</dbReference>
<dbReference type="CDD" id="cd03499">
    <property type="entry name" value="SQR_TypeC_SdhC"/>
    <property type="match status" value="1"/>
</dbReference>
<dbReference type="FunFam" id="1.20.1300.10:FF:000005">
    <property type="entry name" value="Succinate dehydrogenase cytochrome b556 subunit"/>
    <property type="match status" value="1"/>
</dbReference>
<dbReference type="Gene3D" id="1.20.1300.10">
    <property type="entry name" value="Fumarate reductase/succinate dehydrogenase, transmembrane subunit"/>
    <property type="match status" value="1"/>
</dbReference>
<dbReference type="InterPro" id="IPR034804">
    <property type="entry name" value="SQR/QFR_C/D"/>
</dbReference>
<dbReference type="InterPro" id="IPR018495">
    <property type="entry name" value="Succ_DH_cyt_bsu_CS"/>
</dbReference>
<dbReference type="InterPro" id="IPR014314">
    <property type="entry name" value="Succ_DH_cytb556"/>
</dbReference>
<dbReference type="InterPro" id="IPR000701">
    <property type="entry name" value="SuccDH_FuR_B_TM-su"/>
</dbReference>
<dbReference type="NCBIfam" id="NF007021">
    <property type="entry name" value="PRK09487.1"/>
    <property type="match status" value="1"/>
</dbReference>
<dbReference type="NCBIfam" id="TIGR02970">
    <property type="entry name" value="succ_dehyd_cytB"/>
    <property type="match status" value="1"/>
</dbReference>
<dbReference type="PANTHER" id="PTHR10978">
    <property type="entry name" value="SUCCINATE DEHYDROGENASE CYTOCHROME B560 SUBUNIT"/>
    <property type="match status" value="1"/>
</dbReference>
<dbReference type="PANTHER" id="PTHR10978:SF5">
    <property type="entry name" value="SUCCINATE DEHYDROGENASE CYTOCHROME B560 SUBUNIT, MITOCHONDRIAL"/>
    <property type="match status" value="1"/>
</dbReference>
<dbReference type="Pfam" id="PF01127">
    <property type="entry name" value="Sdh_cyt"/>
    <property type="match status" value="1"/>
</dbReference>
<dbReference type="PIRSF" id="PIRSF000178">
    <property type="entry name" value="SDH_cyt_b560"/>
    <property type="match status" value="1"/>
</dbReference>
<dbReference type="SUPFAM" id="SSF81343">
    <property type="entry name" value="Fumarate reductase respiratory complex transmembrane subunits"/>
    <property type="match status" value="1"/>
</dbReference>
<dbReference type="PROSITE" id="PS01000">
    <property type="entry name" value="SDH_CYT_1"/>
    <property type="match status" value="1"/>
</dbReference>
<dbReference type="PROSITE" id="PS01001">
    <property type="entry name" value="SDH_CYT_2"/>
    <property type="match status" value="1"/>
</dbReference>
<evidence type="ECO:0000250" key="1"/>
<evidence type="ECO:0000305" key="2"/>
<accession>P63726</accession>
<accession>Q8XG40</accession>
<gene>
    <name type="primary">sdhC</name>
    <name type="ordered locus">STY0775</name>
    <name type="ordered locus">t2144</name>
</gene>
<proteinExistence type="inferred from homology"/>
<name>DHSC_SALTI</name>
<comment type="function">
    <text evidence="1">Membrane-anchoring subunit of succinate dehydrogenase (SDH).</text>
</comment>
<comment type="cofactor">
    <cofactor evidence="1">
        <name>heme</name>
        <dbReference type="ChEBI" id="CHEBI:30413"/>
    </cofactor>
    <text evidence="1">The heme is bound between the two transmembrane subunits.</text>
</comment>
<comment type="pathway">
    <text>Carbohydrate metabolism; tricarboxylic acid cycle.</text>
</comment>
<comment type="subunit">
    <text evidence="1">Part of an enzyme complex containing four subunits: a flavoprotein, an iron-sulfur protein, plus two membrane-anchoring proteins, SdhC and SdhD. The complex can form homotrimers (By similarity).</text>
</comment>
<comment type="subcellular location">
    <subcellularLocation>
        <location>Cell inner membrane</location>
        <topology>Multi-pass membrane protein</topology>
    </subcellularLocation>
</comment>
<comment type="similarity">
    <text evidence="2">Belongs to the cytochrome b560 family.</text>
</comment>